<proteinExistence type="evidence at protein level"/>
<reference key="1">
    <citation type="journal article" date="2020" name="Sci. Rep.">
        <title>Evolution of isoprenyl diphosphate synthase-like terpene synthases in fungi.</title>
        <authorList>
            <person name="Wei G."/>
            <person name="Eberl F."/>
            <person name="Chen X."/>
            <person name="Zhang C."/>
            <person name="Unsicker S.B."/>
            <person name="Koellner T.G."/>
            <person name="Gershenzon J."/>
            <person name="Chen F."/>
        </authorList>
    </citation>
    <scope>NUCLEOTIDE SEQUENCE [MRNA]</scope>
    <scope>FUNCTION</scope>
    <scope>CATALYTIC ACTIVITY</scope>
</reference>
<reference key="2">
    <citation type="journal article" date="2011" name="Proc. Natl. Acad. Sci. U.S.A.">
        <title>Obligate biotrophy features unraveled by the genomic analysis of rust fungi.</title>
        <authorList>
            <person name="Duplessis S."/>
            <person name="Cuomo C.A."/>
            <person name="Lin Y.-C."/>
            <person name="Aerts A."/>
            <person name="Tisserant E."/>
            <person name="Veneault-Fourrey C."/>
            <person name="Joly D.L."/>
            <person name="Hacquard S."/>
            <person name="Amselem J."/>
            <person name="Cantarel B.L."/>
            <person name="Chiu R."/>
            <person name="Coutinho P.M."/>
            <person name="Feau N."/>
            <person name="Field M."/>
            <person name="Frey P."/>
            <person name="Gelhaye E."/>
            <person name="Goldberg J."/>
            <person name="Grabherr M.G."/>
            <person name="Kodira C.D."/>
            <person name="Kohler A."/>
            <person name="Kuees U."/>
            <person name="Lindquist E.A."/>
            <person name="Lucas S.M."/>
            <person name="Mago R."/>
            <person name="Mauceli E."/>
            <person name="Morin E."/>
            <person name="Murat C."/>
            <person name="Pangilinan J.L."/>
            <person name="Park R."/>
            <person name="Pearson M."/>
            <person name="Quesneville H."/>
            <person name="Rouhier N."/>
            <person name="Sakthikumar S."/>
            <person name="Salamov A.A."/>
            <person name="Schmutz J."/>
            <person name="Selles B."/>
            <person name="Shapiro H."/>
            <person name="Tanguay P."/>
            <person name="Tuskan G.A."/>
            <person name="Henrissat B."/>
            <person name="Van de Peer Y."/>
            <person name="Rouze P."/>
            <person name="Ellis J.G."/>
            <person name="Dodds P.N."/>
            <person name="Schein J.E."/>
            <person name="Zhong S."/>
            <person name="Hamelin R.C."/>
            <person name="Grigoriev I.V."/>
            <person name="Szabo L.J."/>
            <person name="Martin F."/>
        </authorList>
    </citation>
    <scope>NUCLEOTIDE SEQUENCE [LARGE SCALE GENOMIC DNA]</scope>
    <source>
        <strain>98AG31 / pathotype 3-4-7</strain>
    </source>
</reference>
<dbReference type="EC" id="4.2.3.-" evidence="2"/>
<dbReference type="EMBL" id="MK946439">
    <property type="protein sequence ID" value="QIG55791.1"/>
    <property type="molecule type" value="mRNA"/>
</dbReference>
<dbReference type="EMBL" id="GL883193">
    <property type="protein sequence ID" value="EGF97904.1"/>
    <property type="status" value="ALT_SEQ"/>
    <property type="molecule type" value="Genomic_DNA"/>
</dbReference>
<dbReference type="RefSeq" id="XP_007418803.1">
    <property type="nucleotide sequence ID" value="XM_007418741.1"/>
</dbReference>
<dbReference type="SMR" id="A0A858E4Y6"/>
<dbReference type="STRING" id="747676.F4SBQ2"/>
<dbReference type="EnsemblFungi" id="EGF97904">
    <property type="protein sequence ID" value="EGF97904"/>
    <property type="gene ID" value="MELLADRAFT_41117"/>
</dbReference>
<dbReference type="GeneID" id="18927947"/>
<dbReference type="KEGG" id="mlr:MELLADRAFT_41117"/>
<dbReference type="VEuPathDB" id="FungiDB:MELLADRAFT_41117"/>
<dbReference type="eggNOG" id="KOG0777">
    <property type="taxonomic scope" value="Eukaryota"/>
</dbReference>
<dbReference type="HOGENOM" id="CLU_014015_6_0_1"/>
<dbReference type="OrthoDB" id="6921389at2759"/>
<dbReference type="Proteomes" id="UP000001072">
    <property type="component" value="Unassembled WGS sequence"/>
</dbReference>
<dbReference type="GO" id="GO:0016829">
    <property type="term" value="F:lyase activity"/>
    <property type="evidence" value="ECO:0007669"/>
    <property type="project" value="UniProtKB-KW"/>
</dbReference>
<dbReference type="GO" id="GO:0046872">
    <property type="term" value="F:metal ion binding"/>
    <property type="evidence" value="ECO:0007669"/>
    <property type="project" value="UniProtKB-KW"/>
</dbReference>
<dbReference type="GO" id="GO:0004659">
    <property type="term" value="F:prenyltransferase activity"/>
    <property type="evidence" value="ECO:0007669"/>
    <property type="project" value="InterPro"/>
</dbReference>
<dbReference type="GO" id="GO:0008299">
    <property type="term" value="P:isoprenoid biosynthetic process"/>
    <property type="evidence" value="ECO:0007669"/>
    <property type="project" value="InterPro"/>
</dbReference>
<dbReference type="CDD" id="cd00867">
    <property type="entry name" value="Trans_IPPS"/>
    <property type="match status" value="1"/>
</dbReference>
<dbReference type="Gene3D" id="1.10.600.10">
    <property type="entry name" value="Farnesyl Diphosphate Synthase"/>
    <property type="match status" value="1"/>
</dbReference>
<dbReference type="InterPro" id="IPR008949">
    <property type="entry name" value="Isoprenoid_synthase_dom_sf"/>
</dbReference>
<dbReference type="InterPro" id="IPR000092">
    <property type="entry name" value="Polyprenyl_synt"/>
</dbReference>
<dbReference type="PANTHER" id="PTHR12001">
    <property type="entry name" value="GERANYLGERANYL PYROPHOSPHATE SYNTHASE"/>
    <property type="match status" value="1"/>
</dbReference>
<dbReference type="PANTHER" id="PTHR12001:SF44">
    <property type="entry name" value="GERANYLGERANYL PYROPHOSPHATE SYNTHASE"/>
    <property type="match status" value="1"/>
</dbReference>
<dbReference type="Pfam" id="PF00348">
    <property type="entry name" value="polyprenyl_synt"/>
    <property type="match status" value="1"/>
</dbReference>
<dbReference type="SFLD" id="SFLDS00005">
    <property type="entry name" value="Isoprenoid_Synthase_Type_I"/>
    <property type="match status" value="1"/>
</dbReference>
<dbReference type="SUPFAM" id="SSF48576">
    <property type="entry name" value="Terpenoid synthases"/>
    <property type="match status" value="1"/>
</dbReference>
<feature type="chain" id="PRO_0000457154" description="IDS-like terpene synthase 2">
    <location>
        <begin position="1"/>
        <end position="316"/>
    </location>
</feature>
<feature type="binding site" evidence="1">
    <location>
        <position position="69"/>
    </location>
    <ligand>
        <name>Mg(2+)</name>
        <dbReference type="ChEBI" id="CHEBI:18420"/>
        <label>1</label>
    </ligand>
</feature>
<feature type="binding site" evidence="1">
    <location>
        <position position="69"/>
    </location>
    <ligand>
        <name>Mg(2+)</name>
        <dbReference type="ChEBI" id="CHEBI:18420"/>
        <label>2</label>
    </ligand>
</feature>
<feature type="binding site" evidence="1">
    <location>
        <position position="73"/>
    </location>
    <ligand>
        <name>Mg(2+)</name>
        <dbReference type="ChEBI" id="CHEBI:18420"/>
        <label>1</label>
    </ligand>
</feature>
<feature type="binding site" evidence="1">
    <location>
        <position position="73"/>
    </location>
    <ligand>
        <name>Mg(2+)</name>
        <dbReference type="ChEBI" id="CHEBI:18420"/>
        <label>2</label>
    </ligand>
</feature>
<keyword id="KW-0456">Lyase</keyword>
<keyword id="KW-0460">Magnesium</keyword>
<keyword id="KW-0479">Metal-binding</keyword>
<keyword id="KW-1185">Reference proteome</keyword>
<organism>
    <name type="scientific">Melampsora larici-populina (strain 98AG31 / pathotype 3-4-7)</name>
    <name type="common">Poplar leaf rust fungus</name>
    <dbReference type="NCBI Taxonomy" id="747676"/>
    <lineage>
        <taxon>Eukaryota</taxon>
        <taxon>Fungi</taxon>
        <taxon>Dikarya</taxon>
        <taxon>Basidiomycota</taxon>
        <taxon>Pucciniomycotina</taxon>
        <taxon>Pucciniomycetes</taxon>
        <taxon>Pucciniales</taxon>
        <taxon>Melampsoraceae</taxon>
        <taxon>Melampsora</taxon>
    </lineage>
</organism>
<name>TPS2_MELLP</name>
<evidence type="ECO:0000250" key="1">
    <source>
        <dbReference type="UniProtKB" id="Q12051"/>
    </source>
</evidence>
<evidence type="ECO:0000269" key="2">
    <source>
    </source>
</evidence>
<evidence type="ECO:0000303" key="3">
    <source>
    </source>
</evidence>
<evidence type="ECO:0000305" key="4"/>
<sequence length="316" mass="35964">MMLPTIVEWSEPDQKILLEPYTYLGINTDKELPAMVTRAFNHWYQVPQPALDIILKIVGPIHVASLLIDDIQDDSDLRKGKPVAHTVYGVAQTINTATYVFFDAYRNISKLTPFLKSPEITDLGSIIDDEIMALHRGQGKDLYWRDSLICPTEEEYLRMIHNKTGAMFRLPIKLLQALSPVESLPDCFPLVNIIGILAQIQNDLLSLSREFTEDKGFCEDFSEGKFSFPIIHAIKADSSNSLLMDILRSRPKDEATKRKALRYMNDQTKSLDHAFKVIRKLEKIAKEEIEKLGGNPELSSIFELIHFSSTPEIDDQ</sequence>
<comment type="function">
    <text evidence="2">Terpene synthase that shows monoterpene synthase activity and produces linalool, using geranyl diphosphate (GPP) as substrate (PubMed:32913319). Also shows sesquiterpene synthase activity as it is able to convert farnesyl diphosphate (FPP) into (E)-nerolidol (PubMed:32913319).</text>
</comment>
<comment type="catalytic activity">
    <reaction evidence="2">
        <text>(2E)-geranyl diphosphate + H2O = linalool + diphosphate</text>
        <dbReference type="Rhea" id="RHEA:68708"/>
        <dbReference type="ChEBI" id="CHEBI:15377"/>
        <dbReference type="ChEBI" id="CHEBI:17580"/>
        <dbReference type="ChEBI" id="CHEBI:33019"/>
        <dbReference type="ChEBI" id="CHEBI:58057"/>
    </reaction>
    <physiologicalReaction direction="left-to-right" evidence="2">
        <dbReference type="Rhea" id="RHEA:68709"/>
    </physiologicalReaction>
</comment>
<comment type="catalytic activity">
    <reaction evidence="2">
        <text>(2E,6E)-farnesyl diphosphate + H2O = (6E)-nerolidol + diphosphate</text>
        <dbReference type="Rhea" id="RHEA:56984"/>
        <dbReference type="ChEBI" id="CHEBI:15377"/>
        <dbReference type="ChEBI" id="CHEBI:33019"/>
        <dbReference type="ChEBI" id="CHEBI:141283"/>
        <dbReference type="ChEBI" id="CHEBI:175763"/>
    </reaction>
    <physiologicalReaction direction="left-to-right" evidence="2">
        <dbReference type="Rhea" id="RHEA:56985"/>
    </physiologicalReaction>
</comment>
<comment type="cofactor">
    <cofactor evidence="1">
        <name>Mg(2+)</name>
        <dbReference type="ChEBI" id="CHEBI:18420"/>
    </cofactor>
    <text evidence="1">Binds 2 Mg(2+) ions per subunit.</text>
</comment>
<comment type="miscellaneous">
    <text evidence="2">IDS-like terpene synthases originate from a geranylgeranyl diphosphate synthase (GGDPS) progenitor in fungi, after the split of Melampsora from other genera within the class of pucciniomycetes. They lack coupling activity and act as classical terpene synthases.</text>
</comment>
<comment type="similarity">
    <text evidence="4">Belongs to the FPP/GGPP synthase family.</text>
</comment>
<comment type="sequence caution" evidence="4">
    <conflict type="erroneous gene model prediction">
        <sequence resource="EMBL-CDS" id="EGF97904"/>
    </conflict>
</comment>
<gene>
    <name evidence="3" type="primary">ILTPS2</name>
    <name type="ORF">MELLADRAFT_41117</name>
</gene>
<accession>A0A858E4Y6</accession>
<accession>F4SBQ2</accession>
<protein>
    <recommendedName>
        <fullName evidence="3">IDS-like terpene synthase 2</fullName>
        <shortName evidence="3">ILTPS2</shortName>
        <ecNumber evidence="2">4.2.3.-</ecNumber>
    </recommendedName>
</protein>